<feature type="chain" id="PRO_0000367259" description="Uncharacterized N-acetyltransferase DDB_G0290199">
    <location>
        <begin position="1"/>
        <end position="216"/>
    </location>
</feature>
<feature type="domain" description="N-acetyltransferase" evidence="1">
    <location>
        <begin position="1"/>
        <end position="216"/>
    </location>
</feature>
<evidence type="ECO:0000255" key="1">
    <source>
        <dbReference type="PROSITE-ProRule" id="PRU00532"/>
    </source>
</evidence>
<evidence type="ECO:0000305" key="2"/>
<keyword id="KW-0012">Acyltransferase</keyword>
<keyword id="KW-1185">Reference proteome</keyword>
<keyword id="KW-0808">Transferase</keyword>
<organism>
    <name type="scientific">Dictyostelium discoideum</name>
    <name type="common">Social amoeba</name>
    <dbReference type="NCBI Taxonomy" id="44689"/>
    <lineage>
        <taxon>Eukaryota</taxon>
        <taxon>Amoebozoa</taxon>
        <taxon>Evosea</taxon>
        <taxon>Eumycetozoa</taxon>
        <taxon>Dictyostelia</taxon>
        <taxon>Dictyosteliales</taxon>
        <taxon>Dictyosteliaceae</taxon>
        <taxon>Dictyostelium</taxon>
    </lineage>
</organism>
<protein>
    <recommendedName>
        <fullName>Uncharacterized N-acetyltransferase DDB_G0290199</fullName>
        <ecNumber>2.3.1.-</ecNumber>
    </recommendedName>
</protein>
<sequence>MVVKIVEAYEKVDQVKILFKEYVEWLNIDLSFQNFSEEFNSLPGKYSIENDGRLYIAYSDESLAGCVGLRKINIEINENKNNQQVDHDETSTIIIKKEQQQQQQQQQQQQQQQQQQQQQQQQQQQQQQQQQQQQKICEMKRLFVKSEFRGLKIGKLLVERLINDAKEQNYDYMVLDTLKTLTTAISIYKSFGFIEFDPYYYNPNSNDVTFLKLKLK</sequence>
<dbReference type="EC" id="2.3.1.-"/>
<dbReference type="EMBL" id="AAFI02000161">
    <property type="protein sequence ID" value="EAL62321.1"/>
    <property type="molecule type" value="Genomic_DNA"/>
</dbReference>
<dbReference type="RefSeq" id="XP_635826.1">
    <property type="nucleotide sequence ID" value="XM_630734.1"/>
</dbReference>
<dbReference type="STRING" id="44689.Q54GF2"/>
<dbReference type="PaxDb" id="44689-DDB0188775"/>
<dbReference type="EnsemblProtists" id="EAL62321">
    <property type="protein sequence ID" value="EAL62321"/>
    <property type="gene ID" value="DDB_G0290199"/>
</dbReference>
<dbReference type="GeneID" id="8627534"/>
<dbReference type="KEGG" id="ddi:DDB_G0290199"/>
<dbReference type="dictyBase" id="DDB_G0290199"/>
<dbReference type="VEuPathDB" id="AmoebaDB:DDB_G0290199"/>
<dbReference type="eggNOG" id="KOG3139">
    <property type="taxonomic scope" value="Eukaryota"/>
</dbReference>
<dbReference type="HOGENOM" id="CLU_013985_11_0_1"/>
<dbReference type="InParanoid" id="Q54GF2"/>
<dbReference type="PhylomeDB" id="Q54GF2"/>
<dbReference type="PRO" id="PR:Q54GF2"/>
<dbReference type="Proteomes" id="UP000002195">
    <property type="component" value="Chromosome 5"/>
</dbReference>
<dbReference type="GO" id="GO:0016747">
    <property type="term" value="F:acyltransferase activity, transferring groups other than amino-acyl groups"/>
    <property type="evidence" value="ECO:0007669"/>
    <property type="project" value="InterPro"/>
</dbReference>
<dbReference type="CDD" id="cd04301">
    <property type="entry name" value="NAT_SF"/>
    <property type="match status" value="1"/>
</dbReference>
<dbReference type="Gene3D" id="3.40.630.30">
    <property type="match status" value="1"/>
</dbReference>
<dbReference type="InterPro" id="IPR052777">
    <property type="entry name" value="Acetyltransferase_Enz"/>
</dbReference>
<dbReference type="InterPro" id="IPR016181">
    <property type="entry name" value="Acyl_CoA_acyltransferase"/>
</dbReference>
<dbReference type="InterPro" id="IPR000182">
    <property type="entry name" value="GNAT_dom"/>
</dbReference>
<dbReference type="PANTHER" id="PTHR43305">
    <property type="entry name" value="FAMILY N-ACETYLTRANSFERASE, PUTATIVE (AFU_ORTHOLOGUE AFUA_2G01380)-RELATED"/>
    <property type="match status" value="1"/>
</dbReference>
<dbReference type="PANTHER" id="PTHR43305:SF1">
    <property type="entry name" value="FAMILY N-ACETYLTRANSFERASE, PUTATIVE (AFU_ORTHOLOGUE AFUA_2G01380)-RELATED"/>
    <property type="match status" value="1"/>
</dbReference>
<dbReference type="Pfam" id="PF00583">
    <property type="entry name" value="Acetyltransf_1"/>
    <property type="match status" value="1"/>
</dbReference>
<dbReference type="SUPFAM" id="SSF55729">
    <property type="entry name" value="Acyl-CoA N-acyltransferases (Nat)"/>
    <property type="match status" value="1"/>
</dbReference>
<dbReference type="SUPFAM" id="SSF81995">
    <property type="entry name" value="beta-sandwich domain of Sec23/24"/>
    <property type="match status" value="1"/>
</dbReference>
<dbReference type="PROSITE" id="PS51186">
    <property type="entry name" value="GNAT"/>
    <property type="match status" value="1"/>
</dbReference>
<gene>
    <name type="ORF">DDB_G0290199</name>
</gene>
<accession>Q54GF2</accession>
<proteinExistence type="inferred from homology"/>
<name>Y0199_DICDI</name>
<reference key="1">
    <citation type="journal article" date="2005" name="Nature">
        <title>The genome of the social amoeba Dictyostelium discoideum.</title>
        <authorList>
            <person name="Eichinger L."/>
            <person name="Pachebat J.A."/>
            <person name="Gloeckner G."/>
            <person name="Rajandream M.A."/>
            <person name="Sucgang R."/>
            <person name="Berriman M."/>
            <person name="Song J."/>
            <person name="Olsen R."/>
            <person name="Szafranski K."/>
            <person name="Xu Q."/>
            <person name="Tunggal B."/>
            <person name="Kummerfeld S."/>
            <person name="Madera M."/>
            <person name="Konfortov B.A."/>
            <person name="Rivero F."/>
            <person name="Bankier A.T."/>
            <person name="Lehmann R."/>
            <person name="Hamlin N."/>
            <person name="Davies R."/>
            <person name="Gaudet P."/>
            <person name="Fey P."/>
            <person name="Pilcher K."/>
            <person name="Chen G."/>
            <person name="Saunders D."/>
            <person name="Sodergren E.J."/>
            <person name="Davis P."/>
            <person name="Kerhornou A."/>
            <person name="Nie X."/>
            <person name="Hall N."/>
            <person name="Anjard C."/>
            <person name="Hemphill L."/>
            <person name="Bason N."/>
            <person name="Farbrother P."/>
            <person name="Desany B."/>
            <person name="Just E."/>
            <person name="Morio T."/>
            <person name="Rost R."/>
            <person name="Churcher C.M."/>
            <person name="Cooper J."/>
            <person name="Haydock S."/>
            <person name="van Driessche N."/>
            <person name="Cronin A."/>
            <person name="Goodhead I."/>
            <person name="Muzny D.M."/>
            <person name="Mourier T."/>
            <person name="Pain A."/>
            <person name="Lu M."/>
            <person name="Harper D."/>
            <person name="Lindsay R."/>
            <person name="Hauser H."/>
            <person name="James K.D."/>
            <person name="Quiles M."/>
            <person name="Madan Babu M."/>
            <person name="Saito T."/>
            <person name="Buchrieser C."/>
            <person name="Wardroper A."/>
            <person name="Felder M."/>
            <person name="Thangavelu M."/>
            <person name="Johnson D."/>
            <person name="Knights A."/>
            <person name="Loulseged H."/>
            <person name="Mungall K.L."/>
            <person name="Oliver K."/>
            <person name="Price C."/>
            <person name="Quail M.A."/>
            <person name="Urushihara H."/>
            <person name="Hernandez J."/>
            <person name="Rabbinowitsch E."/>
            <person name="Steffen D."/>
            <person name="Sanders M."/>
            <person name="Ma J."/>
            <person name="Kohara Y."/>
            <person name="Sharp S."/>
            <person name="Simmonds M.N."/>
            <person name="Spiegler S."/>
            <person name="Tivey A."/>
            <person name="Sugano S."/>
            <person name="White B."/>
            <person name="Walker D."/>
            <person name="Woodward J.R."/>
            <person name="Winckler T."/>
            <person name="Tanaka Y."/>
            <person name="Shaulsky G."/>
            <person name="Schleicher M."/>
            <person name="Weinstock G.M."/>
            <person name="Rosenthal A."/>
            <person name="Cox E.C."/>
            <person name="Chisholm R.L."/>
            <person name="Gibbs R.A."/>
            <person name="Loomis W.F."/>
            <person name="Platzer M."/>
            <person name="Kay R.R."/>
            <person name="Williams J.G."/>
            <person name="Dear P.H."/>
            <person name="Noegel A.A."/>
            <person name="Barrell B.G."/>
            <person name="Kuspa A."/>
        </authorList>
    </citation>
    <scope>NUCLEOTIDE SEQUENCE [LARGE SCALE GENOMIC DNA]</scope>
    <source>
        <strain>AX4</strain>
    </source>
</reference>
<comment type="similarity">
    <text evidence="2">Belongs to the acetyltransferase family.</text>
</comment>